<reference key="1">
    <citation type="journal article" date="2005" name="J. Bacteriol.">
        <title>Insights into genome plasticity and pathogenicity of the plant pathogenic Bacterium Xanthomonas campestris pv. vesicatoria revealed by the complete genome sequence.</title>
        <authorList>
            <person name="Thieme F."/>
            <person name="Koebnik R."/>
            <person name="Bekel T."/>
            <person name="Berger C."/>
            <person name="Boch J."/>
            <person name="Buettner D."/>
            <person name="Caldana C."/>
            <person name="Gaigalat L."/>
            <person name="Goesmann A."/>
            <person name="Kay S."/>
            <person name="Kirchner O."/>
            <person name="Lanz C."/>
            <person name="Linke B."/>
            <person name="McHardy A.C."/>
            <person name="Meyer F."/>
            <person name="Mittenhuber G."/>
            <person name="Nies D.H."/>
            <person name="Niesbach-Kloesgen U."/>
            <person name="Patschkowski T."/>
            <person name="Rueckert C."/>
            <person name="Rupp O."/>
            <person name="Schneiker S."/>
            <person name="Schuster S.C."/>
            <person name="Vorhoelter F.J."/>
            <person name="Weber E."/>
            <person name="Puehler A."/>
            <person name="Bonas U."/>
            <person name="Bartels D."/>
            <person name="Kaiser O."/>
        </authorList>
    </citation>
    <scope>NUCLEOTIDE SEQUENCE [LARGE SCALE GENOMIC DNA]</scope>
    <source>
        <strain>85-10</strain>
    </source>
</reference>
<feature type="chain" id="PRO_0000331928" description="Methionine--tRNA ligase">
    <location>
        <begin position="1"/>
        <end position="694"/>
    </location>
</feature>
<feature type="domain" description="tRNA-binding" evidence="1">
    <location>
        <begin position="591"/>
        <end position="694"/>
    </location>
</feature>
<feature type="region of interest" description="Disordered" evidence="2">
    <location>
        <begin position="550"/>
        <end position="582"/>
    </location>
</feature>
<feature type="short sequence motif" description="'HIGH' region">
    <location>
        <begin position="12"/>
        <end position="22"/>
    </location>
</feature>
<feature type="short sequence motif" description="'KMSKS' region">
    <location>
        <begin position="330"/>
        <end position="334"/>
    </location>
</feature>
<feature type="compositionally biased region" description="Low complexity" evidence="2">
    <location>
        <begin position="550"/>
        <end position="573"/>
    </location>
</feature>
<feature type="binding site" evidence="1">
    <location>
        <position position="143"/>
    </location>
    <ligand>
        <name>Zn(2+)</name>
        <dbReference type="ChEBI" id="CHEBI:29105"/>
    </ligand>
</feature>
<feature type="binding site" evidence="1">
    <location>
        <position position="146"/>
    </location>
    <ligand>
        <name>Zn(2+)</name>
        <dbReference type="ChEBI" id="CHEBI:29105"/>
    </ligand>
</feature>
<feature type="binding site" evidence="1">
    <location>
        <position position="156"/>
    </location>
    <ligand>
        <name>Zn(2+)</name>
        <dbReference type="ChEBI" id="CHEBI:29105"/>
    </ligand>
</feature>
<feature type="binding site" evidence="1">
    <location>
        <position position="159"/>
    </location>
    <ligand>
        <name>Zn(2+)</name>
        <dbReference type="ChEBI" id="CHEBI:29105"/>
    </ligand>
</feature>
<feature type="binding site" evidence="1">
    <location>
        <position position="333"/>
    </location>
    <ligand>
        <name>ATP</name>
        <dbReference type="ChEBI" id="CHEBI:30616"/>
    </ligand>
</feature>
<protein>
    <recommendedName>
        <fullName evidence="1">Methionine--tRNA ligase</fullName>
        <ecNumber evidence="1">6.1.1.10</ecNumber>
    </recommendedName>
    <alternativeName>
        <fullName evidence="1">Methionyl-tRNA synthetase</fullName>
        <shortName evidence="1">MetRS</shortName>
    </alternativeName>
</protein>
<accession>Q3BVP1</accession>
<comment type="function">
    <text evidence="1">Is required not only for elongation of protein synthesis but also for the initiation of all mRNA translation through initiator tRNA(fMet) aminoacylation.</text>
</comment>
<comment type="catalytic activity">
    <reaction evidence="1">
        <text>tRNA(Met) + L-methionine + ATP = L-methionyl-tRNA(Met) + AMP + diphosphate</text>
        <dbReference type="Rhea" id="RHEA:13481"/>
        <dbReference type="Rhea" id="RHEA-COMP:9667"/>
        <dbReference type="Rhea" id="RHEA-COMP:9698"/>
        <dbReference type="ChEBI" id="CHEBI:30616"/>
        <dbReference type="ChEBI" id="CHEBI:33019"/>
        <dbReference type="ChEBI" id="CHEBI:57844"/>
        <dbReference type="ChEBI" id="CHEBI:78442"/>
        <dbReference type="ChEBI" id="CHEBI:78530"/>
        <dbReference type="ChEBI" id="CHEBI:456215"/>
        <dbReference type="EC" id="6.1.1.10"/>
    </reaction>
</comment>
<comment type="cofactor">
    <cofactor evidence="1">
        <name>Zn(2+)</name>
        <dbReference type="ChEBI" id="CHEBI:29105"/>
    </cofactor>
    <text evidence="1">Binds 1 zinc ion per subunit.</text>
</comment>
<comment type="subunit">
    <text evidence="1">Homodimer.</text>
</comment>
<comment type="subcellular location">
    <subcellularLocation>
        <location evidence="1">Cytoplasm</location>
    </subcellularLocation>
</comment>
<comment type="similarity">
    <text evidence="1">Belongs to the class-I aminoacyl-tRNA synthetase family. MetG type 1 subfamily.</text>
</comment>
<keyword id="KW-0030">Aminoacyl-tRNA synthetase</keyword>
<keyword id="KW-0067">ATP-binding</keyword>
<keyword id="KW-0963">Cytoplasm</keyword>
<keyword id="KW-0436">Ligase</keyword>
<keyword id="KW-0479">Metal-binding</keyword>
<keyword id="KW-0547">Nucleotide-binding</keyword>
<keyword id="KW-0648">Protein biosynthesis</keyword>
<keyword id="KW-0694">RNA-binding</keyword>
<keyword id="KW-0820">tRNA-binding</keyword>
<keyword id="KW-0862">Zinc</keyword>
<proteinExistence type="inferred from homology"/>
<sequence length="694" mass="75447">MTRTALVTTALPYANGPLHLGHLVGYIQADIWVRARRLRGDKTWFVCADDTHGTPIMLAAEKAGVTPEAFIANIQASHERDFAAFGVTFDHYDSTNSPVNRELTEAFYAKLEAAGHISRRSVAQFYDTAKGMFLPDRYIKGICPNCGSPDQYGDNCEVCGATYAPTELKEPKSVISGATPELRDSEHFFFEVGHFDGFLREWLAGDVALPGVKAKLKEWLDAEGGLRAWDISRDAPYFGFQIPGQPGKYFYVWLDAPIGYLCSFKTLCAQMGEDFASHLVAGTQTELHHFIGKDIVNFHGLFWPAVLHGTGHRAPTRLHVNGYLTVDGAKMSKSRGTFVMARTFLDVGLEPEALRYYFAAKSSGGVDDLDLNLGDFIARVNADLVGKFVNLASRCAGFIGKRFDGKLADALPDAAQYDRFVAALAPIREAYERNDAASAIRQTMALADEANKYIDDTKPWVIAKQDGADAQLQSVCTQGLNLFRILVAALKPILPRTCAEAEAFLSAPMTSWEDVVRPLTAHTIQPYTALFTRIDPKLIDAMTDASKDTMAAPAAPATTTKPAPSKADAKPAAVANPESQTTNPGFIGMDDFAKLDLRIGKVLVCEFVEGSDKLLRFELDAGELGKRQIFSGIRASYGEPDALVGRSVVFIANLAPRKMRFGISEGMILSAGFDGGALALLDADSGAQPGMPVR</sequence>
<dbReference type="EC" id="6.1.1.10" evidence="1"/>
<dbReference type="EMBL" id="AM039952">
    <property type="protein sequence ID" value="CAJ23072.1"/>
    <property type="molecule type" value="Genomic_DNA"/>
</dbReference>
<dbReference type="RefSeq" id="WP_011346869.1">
    <property type="nucleotide sequence ID" value="NZ_CP017190.1"/>
</dbReference>
<dbReference type="SMR" id="Q3BVP1"/>
<dbReference type="STRING" id="456327.BJD11_15440"/>
<dbReference type="KEGG" id="xcv:XCV1441"/>
<dbReference type="eggNOG" id="COG0073">
    <property type="taxonomic scope" value="Bacteria"/>
</dbReference>
<dbReference type="eggNOG" id="COG0143">
    <property type="taxonomic scope" value="Bacteria"/>
</dbReference>
<dbReference type="HOGENOM" id="CLU_009710_7_0_6"/>
<dbReference type="Proteomes" id="UP000007069">
    <property type="component" value="Chromosome"/>
</dbReference>
<dbReference type="GO" id="GO:0005829">
    <property type="term" value="C:cytosol"/>
    <property type="evidence" value="ECO:0007669"/>
    <property type="project" value="TreeGrafter"/>
</dbReference>
<dbReference type="GO" id="GO:0005524">
    <property type="term" value="F:ATP binding"/>
    <property type="evidence" value="ECO:0007669"/>
    <property type="project" value="UniProtKB-UniRule"/>
</dbReference>
<dbReference type="GO" id="GO:0046872">
    <property type="term" value="F:metal ion binding"/>
    <property type="evidence" value="ECO:0007669"/>
    <property type="project" value="UniProtKB-KW"/>
</dbReference>
<dbReference type="GO" id="GO:0004825">
    <property type="term" value="F:methionine-tRNA ligase activity"/>
    <property type="evidence" value="ECO:0007669"/>
    <property type="project" value="UniProtKB-UniRule"/>
</dbReference>
<dbReference type="GO" id="GO:0000049">
    <property type="term" value="F:tRNA binding"/>
    <property type="evidence" value="ECO:0007669"/>
    <property type="project" value="UniProtKB-KW"/>
</dbReference>
<dbReference type="GO" id="GO:0006431">
    <property type="term" value="P:methionyl-tRNA aminoacylation"/>
    <property type="evidence" value="ECO:0007669"/>
    <property type="project" value="UniProtKB-UniRule"/>
</dbReference>
<dbReference type="CDD" id="cd07957">
    <property type="entry name" value="Anticodon_Ia_Met"/>
    <property type="match status" value="1"/>
</dbReference>
<dbReference type="CDD" id="cd00814">
    <property type="entry name" value="MetRS_core"/>
    <property type="match status" value="1"/>
</dbReference>
<dbReference type="CDD" id="cd02800">
    <property type="entry name" value="tRNA_bind_EcMetRS_like"/>
    <property type="match status" value="1"/>
</dbReference>
<dbReference type="FunFam" id="1.10.730.10:FF:000005">
    <property type="entry name" value="Methionine--tRNA ligase"/>
    <property type="match status" value="1"/>
</dbReference>
<dbReference type="FunFam" id="2.20.28.20:FF:000001">
    <property type="entry name" value="Methionine--tRNA ligase"/>
    <property type="match status" value="1"/>
</dbReference>
<dbReference type="FunFam" id="2.40.50.140:FF:000042">
    <property type="entry name" value="Methionine--tRNA ligase"/>
    <property type="match status" value="1"/>
</dbReference>
<dbReference type="Gene3D" id="3.40.50.620">
    <property type="entry name" value="HUPs"/>
    <property type="match status" value="1"/>
</dbReference>
<dbReference type="Gene3D" id="1.10.730.10">
    <property type="entry name" value="Isoleucyl-tRNA Synthetase, Domain 1"/>
    <property type="match status" value="1"/>
</dbReference>
<dbReference type="Gene3D" id="2.20.28.20">
    <property type="entry name" value="Methionyl-tRNA synthetase, Zn-domain"/>
    <property type="match status" value="1"/>
</dbReference>
<dbReference type="Gene3D" id="2.40.50.140">
    <property type="entry name" value="Nucleic acid-binding proteins"/>
    <property type="match status" value="1"/>
</dbReference>
<dbReference type="HAMAP" id="MF_00098">
    <property type="entry name" value="Met_tRNA_synth_type1"/>
    <property type="match status" value="1"/>
</dbReference>
<dbReference type="InterPro" id="IPR001412">
    <property type="entry name" value="aa-tRNA-synth_I_CS"/>
</dbReference>
<dbReference type="InterPro" id="IPR041872">
    <property type="entry name" value="Anticodon_Met"/>
</dbReference>
<dbReference type="InterPro" id="IPR004495">
    <property type="entry name" value="Met-tRNA-synth_bsu_C"/>
</dbReference>
<dbReference type="InterPro" id="IPR023458">
    <property type="entry name" value="Met-tRNA_ligase_1"/>
</dbReference>
<dbReference type="InterPro" id="IPR014758">
    <property type="entry name" value="Met-tRNA_synth"/>
</dbReference>
<dbReference type="InterPro" id="IPR015413">
    <property type="entry name" value="Methionyl/Leucyl_tRNA_Synth"/>
</dbReference>
<dbReference type="InterPro" id="IPR033911">
    <property type="entry name" value="MetRS_core"/>
</dbReference>
<dbReference type="InterPro" id="IPR029038">
    <property type="entry name" value="MetRS_Zn"/>
</dbReference>
<dbReference type="InterPro" id="IPR012340">
    <property type="entry name" value="NA-bd_OB-fold"/>
</dbReference>
<dbReference type="InterPro" id="IPR014729">
    <property type="entry name" value="Rossmann-like_a/b/a_fold"/>
</dbReference>
<dbReference type="InterPro" id="IPR002547">
    <property type="entry name" value="tRNA-bd_dom"/>
</dbReference>
<dbReference type="InterPro" id="IPR009080">
    <property type="entry name" value="tRNAsynth_Ia_anticodon-bd"/>
</dbReference>
<dbReference type="NCBIfam" id="TIGR00398">
    <property type="entry name" value="metG"/>
    <property type="match status" value="1"/>
</dbReference>
<dbReference type="NCBIfam" id="TIGR00399">
    <property type="entry name" value="metG_C_term"/>
    <property type="match status" value="1"/>
</dbReference>
<dbReference type="NCBIfam" id="NF001100">
    <property type="entry name" value="PRK00133.1"/>
    <property type="match status" value="1"/>
</dbReference>
<dbReference type="PANTHER" id="PTHR45765">
    <property type="entry name" value="METHIONINE--TRNA LIGASE"/>
    <property type="match status" value="1"/>
</dbReference>
<dbReference type="PANTHER" id="PTHR45765:SF1">
    <property type="entry name" value="METHIONINE--TRNA LIGASE, CYTOPLASMIC"/>
    <property type="match status" value="1"/>
</dbReference>
<dbReference type="Pfam" id="PF19303">
    <property type="entry name" value="Anticodon_3"/>
    <property type="match status" value="1"/>
</dbReference>
<dbReference type="Pfam" id="PF09334">
    <property type="entry name" value="tRNA-synt_1g"/>
    <property type="match status" value="1"/>
</dbReference>
<dbReference type="Pfam" id="PF01588">
    <property type="entry name" value="tRNA_bind"/>
    <property type="match status" value="1"/>
</dbReference>
<dbReference type="PRINTS" id="PR01041">
    <property type="entry name" value="TRNASYNTHMET"/>
</dbReference>
<dbReference type="SUPFAM" id="SSF47323">
    <property type="entry name" value="Anticodon-binding domain of a subclass of class I aminoacyl-tRNA synthetases"/>
    <property type="match status" value="1"/>
</dbReference>
<dbReference type="SUPFAM" id="SSF57770">
    <property type="entry name" value="Methionyl-tRNA synthetase (MetRS), Zn-domain"/>
    <property type="match status" value="1"/>
</dbReference>
<dbReference type="SUPFAM" id="SSF50249">
    <property type="entry name" value="Nucleic acid-binding proteins"/>
    <property type="match status" value="1"/>
</dbReference>
<dbReference type="SUPFAM" id="SSF52374">
    <property type="entry name" value="Nucleotidylyl transferase"/>
    <property type="match status" value="1"/>
</dbReference>
<dbReference type="PROSITE" id="PS00178">
    <property type="entry name" value="AA_TRNA_LIGASE_I"/>
    <property type="match status" value="1"/>
</dbReference>
<dbReference type="PROSITE" id="PS50886">
    <property type="entry name" value="TRBD"/>
    <property type="match status" value="1"/>
</dbReference>
<organism>
    <name type="scientific">Xanthomonas euvesicatoria pv. vesicatoria (strain 85-10)</name>
    <name type="common">Xanthomonas campestris pv. vesicatoria</name>
    <dbReference type="NCBI Taxonomy" id="316273"/>
    <lineage>
        <taxon>Bacteria</taxon>
        <taxon>Pseudomonadati</taxon>
        <taxon>Pseudomonadota</taxon>
        <taxon>Gammaproteobacteria</taxon>
        <taxon>Lysobacterales</taxon>
        <taxon>Lysobacteraceae</taxon>
        <taxon>Xanthomonas</taxon>
    </lineage>
</organism>
<gene>
    <name evidence="1" type="primary">metG</name>
    <name type="ordered locus">XCV1441</name>
</gene>
<evidence type="ECO:0000255" key="1">
    <source>
        <dbReference type="HAMAP-Rule" id="MF_00098"/>
    </source>
</evidence>
<evidence type="ECO:0000256" key="2">
    <source>
        <dbReference type="SAM" id="MobiDB-lite"/>
    </source>
</evidence>
<name>SYM_XANE5</name>